<reference key="1">
    <citation type="journal article" date="1984" name="Hoppe-Seyler's Z. Physiol. Chem.">
        <title>The amino-acid sequence of alpha A- and beta-chains from the major hemoglobin component of American flamingo (Phoenicopterus ruber ruber).</title>
        <authorList>
            <person name="Godovac-Zimmermann J."/>
            <person name="Braunitzer G."/>
        </authorList>
    </citation>
    <scope>PROTEIN SEQUENCE</scope>
</reference>
<reference key="2">
    <citation type="journal article" date="1987" name="Biol. Chem. Hoppe-Seyler">
        <title>Hemoglobin sequences.</title>
        <authorList>
            <person name="Kleinschmidt T."/>
            <person name="Sgouros J.G."/>
        </authorList>
    </citation>
    <scope>SEQUENCE REVISION TO 47</scope>
</reference>
<accession>P01984</accession>
<evidence type="ECO:0000255" key="1">
    <source>
        <dbReference type="PROSITE-ProRule" id="PRU00238"/>
    </source>
</evidence>
<proteinExistence type="evidence at protein level"/>
<name>HBA_PHORB</name>
<sequence length="141" mass="15369">VLSSHDKSNVKGLFGKVGGHLEEYCAETLARMFAAYPQTKTYFPHFDLQPGSAQVKAHGKKVAGALAEAANHIDDIASALSKLSDLHQHKLRVDPVNFKLLAHCFLVVMAIHHPSLLTPEVHASLDKFLCAVGTVLTAKYR</sequence>
<keyword id="KW-0903">Direct protein sequencing</keyword>
<keyword id="KW-0349">Heme</keyword>
<keyword id="KW-0408">Iron</keyword>
<keyword id="KW-0479">Metal-binding</keyword>
<keyword id="KW-0561">Oxygen transport</keyword>
<keyword id="KW-0813">Transport</keyword>
<organism>
    <name type="scientific">Phoenicopterus ruber</name>
    <name type="common">American flamingo</name>
    <name type="synonym">Caribbean flamingo</name>
    <dbReference type="NCBI Taxonomy" id="9217"/>
    <lineage>
        <taxon>Eukaryota</taxon>
        <taxon>Metazoa</taxon>
        <taxon>Chordata</taxon>
        <taxon>Craniata</taxon>
        <taxon>Vertebrata</taxon>
        <taxon>Euteleostomi</taxon>
        <taxon>Archelosauria</taxon>
        <taxon>Archosauria</taxon>
        <taxon>Dinosauria</taxon>
        <taxon>Saurischia</taxon>
        <taxon>Theropoda</taxon>
        <taxon>Coelurosauria</taxon>
        <taxon>Aves</taxon>
        <taxon>Neognathae</taxon>
        <taxon>Neoaves</taxon>
        <taxon>Mirandornithes</taxon>
        <taxon>Phoenicopteriformes</taxon>
        <taxon>Phoenicopteridae</taxon>
        <taxon>Phoenicopterus</taxon>
    </lineage>
</organism>
<protein>
    <recommendedName>
        <fullName>Hemoglobin subunit alpha-A</fullName>
    </recommendedName>
    <alternativeName>
        <fullName>Alpha-A-globin</fullName>
    </alternativeName>
    <alternativeName>
        <fullName>Hemoglobin alpha-A chain</fullName>
    </alternativeName>
</protein>
<dbReference type="PIR" id="A02307">
    <property type="entry name" value="HAGDA"/>
</dbReference>
<dbReference type="SMR" id="P01984"/>
<dbReference type="GO" id="GO:0072562">
    <property type="term" value="C:blood microparticle"/>
    <property type="evidence" value="ECO:0007669"/>
    <property type="project" value="TreeGrafter"/>
</dbReference>
<dbReference type="GO" id="GO:0031838">
    <property type="term" value="C:haptoglobin-hemoglobin complex"/>
    <property type="evidence" value="ECO:0007669"/>
    <property type="project" value="TreeGrafter"/>
</dbReference>
<dbReference type="GO" id="GO:0005833">
    <property type="term" value="C:hemoglobin complex"/>
    <property type="evidence" value="ECO:0007669"/>
    <property type="project" value="InterPro"/>
</dbReference>
<dbReference type="GO" id="GO:0031720">
    <property type="term" value="F:haptoglobin binding"/>
    <property type="evidence" value="ECO:0007669"/>
    <property type="project" value="TreeGrafter"/>
</dbReference>
<dbReference type="GO" id="GO:0020037">
    <property type="term" value="F:heme binding"/>
    <property type="evidence" value="ECO:0007669"/>
    <property type="project" value="InterPro"/>
</dbReference>
<dbReference type="GO" id="GO:0005506">
    <property type="term" value="F:iron ion binding"/>
    <property type="evidence" value="ECO:0007669"/>
    <property type="project" value="InterPro"/>
</dbReference>
<dbReference type="GO" id="GO:0043177">
    <property type="term" value="F:organic acid binding"/>
    <property type="evidence" value="ECO:0007669"/>
    <property type="project" value="TreeGrafter"/>
</dbReference>
<dbReference type="GO" id="GO:0019825">
    <property type="term" value="F:oxygen binding"/>
    <property type="evidence" value="ECO:0007669"/>
    <property type="project" value="InterPro"/>
</dbReference>
<dbReference type="GO" id="GO:0005344">
    <property type="term" value="F:oxygen carrier activity"/>
    <property type="evidence" value="ECO:0007669"/>
    <property type="project" value="UniProtKB-KW"/>
</dbReference>
<dbReference type="GO" id="GO:0004601">
    <property type="term" value="F:peroxidase activity"/>
    <property type="evidence" value="ECO:0007669"/>
    <property type="project" value="TreeGrafter"/>
</dbReference>
<dbReference type="GO" id="GO:0042744">
    <property type="term" value="P:hydrogen peroxide catabolic process"/>
    <property type="evidence" value="ECO:0007669"/>
    <property type="project" value="TreeGrafter"/>
</dbReference>
<dbReference type="CDD" id="cd08927">
    <property type="entry name" value="Hb-alpha-like"/>
    <property type="match status" value="1"/>
</dbReference>
<dbReference type="FunFam" id="1.10.490.10:FF:000002">
    <property type="entry name" value="Hemoglobin subunit alpha"/>
    <property type="match status" value="1"/>
</dbReference>
<dbReference type="Gene3D" id="1.10.490.10">
    <property type="entry name" value="Globins"/>
    <property type="match status" value="1"/>
</dbReference>
<dbReference type="InterPro" id="IPR000971">
    <property type="entry name" value="Globin"/>
</dbReference>
<dbReference type="InterPro" id="IPR009050">
    <property type="entry name" value="Globin-like_sf"/>
</dbReference>
<dbReference type="InterPro" id="IPR012292">
    <property type="entry name" value="Globin/Proto"/>
</dbReference>
<dbReference type="InterPro" id="IPR002338">
    <property type="entry name" value="Hemoglobin_a-typ"/>
</dbReference>
<dbReference type="InterPro" id="IPR050056">
    <property type="entry name" value="Hemoglobin_oxygen_transport"/>
</dbReference>
<dbReference type="InterPro" id="IPR002339">
    <property type="entry name" value="Hemoglobin_pi"/>
</dbReference>
<dbReference type="PANTHER" id="PTHR11442">
    <property type="entry name" value="HEMOGLOBIN FAMILY MEMBER"/>
    <property type="match status" value="1"/>
</dbReference>
<dbReference type="PANTHER" id="PTHR11442:SF48">
    <property type="entry name" value="HEMOGLOBIN SUBUNIT ALPHA"/>
    <property type="match status" value="1"/>
</dbReference>
<dbReference type="Pfam" id="PF00042">
    <property type="entry name" value="Globin"/>
    <property type="match status" value="1"/>
</dbReference>
<dbReference type="PRINTS" id="PR00612">
    <property type="entry name" value="ALPHAHAEM"/>
</dbReference>
<dbReference type="PRINTS" id="PR00815">
    <property type="entry name" value="PIHAEM"/>
</dbReference>
<dbReference type="SUPFAM" id="SSF46458">
    <property type="entry name" value="Globin-like"/>
    <property type="match status" value="1"/>
</dbReference>
<dbReference type="PROSITE" id="PS01033">
    <property type="entry name" value="GLOBIN"/>
    <property type="match status" value="1"/>
</dbReference>
<gene>
    <name type="primary">HBAA</name>
</gene>
<comment type="function">
    <text>Involved in oxygen transport from the lung to the various peripheral tissues.</text>
</comment>
<comment type="subunit">
    <text>Heterotetramer of two alpha chains and two beta chains.</text>
</comment>
<comment type="tissue specificity">
    <text>Red blood cells.</text>
</comment>
<comment type="similarity">
    <text evidence="1">Belongs to the globin family.</text>
</comment>
<feature type="chain" id="PRO_0000052728" description="Hemoglobin subunit alpha-A">
    <location>
        <begin position="1"/>
        <end position="141"/>
    </location>
</feature>
<feature type="domain" description="Globin" evidence="1">
    <location>
        <begin position="1"/>
        <end position="141"/>
    </location>
</feature>
<feature type="binding site" evidence="1">
    <location>
        <position position="58"/>
    </location>
    <ligand>
        <name>O2</name>
        <dbReference type="ChEBI" id="CHEBI:15379"/>
    </ligand>
</feature>
<feature type="binding site" description="proximal binding residue" evidence="1">
    <location>
        <position position="87"/>
    </location>
    <ligand>
        <name>heme b</name>
        <dbReference type="ChEBI" id="CHEBI:60344"/>
    </ligand>
    <ligandPart>
        <name>Fe</name>
        <dbReference type="ChEBI" id="CHEBI:18248"/>
    </ligandPart>
</feature>